<accession>Q6GEW6</accession>
<sequence>MDHKSPLVSWNLFGFDIVFNLSSILMILVTAFLVFLLAIICTRNLKKRPTGKQNFVEWIFDFVRGIIEGNMAWKKGGQFHFLAVTLILYIFIANMLGLPFSIVTKDHTLWWKSPTADATVTLTLSTTIILLTHFYGIKMRGTKQYLKGYVQPFWPLAIINVFEEFTSTLTLGLRLYGNIFAGEILLTLLAGLFFNEPAWGWIISIPGLIVWQAFSIFVGTIQAYIFIMLSMVYMSHKVADEH</sequence>
<reference key="1">
    <citation type="journal article" date="2004" name="Proc. Natl. Acad. Sci. U.S.A.">
        <title>Complete genomes of two clinical Staphylococcus aureus strains: evidence for the rapid evolution of virulence and drug resistance.</title>
        <authorList>
            <person name="Holden M.T.G."/>
            <person name="Feil E.J."/>
            <person name="Lindsay J.A."/>
            <person name="Peacock S.J."/>
            <person name="Day N.P.J."/>
            <person name="Enright M.C."/>
            <person name="Foster T.J."/>
            <person name="Moore C.E."/>
            <person name="Hurst L."/>
            <person name="Atkin R."/>
            <person name="Barron A."/>
            <person name="Bason N."/>
            <person name="Bentley S.D."/>
            <person name="Chillingworth C."/>
            <person name="Chillingworth T."/>
            <person name="Churcher C."/>
            <person name="Clark L."/>
            <person name="Corton C."/>
            <person name="Cronin A."/>
            <person name="Doggett J."/>
            <person name="Dowd L."/>
            <person name="Feltwell T."/>
            <person name="Hance Z."/>
            <person name="Harris B."/>
            <person name="Hauser H."/>
            <person name="Holroyd S."/>
            <person name="Jagels K."/>
            <person name="James K.D."/>
            <person name="Lennard N."/>
            <person name="Line A."/>
            <person name="Mayes R."/>
            <person name="Moule S."/>
            <person name="Mungall K."/>
            <person name="Ormond D."/>
            <person name="Quail M.A."/>
            <person name="Rabbinowitsch E."/>
            <person name="Rutherford K.M."/>
            <person name="Sanders M."/>
            <person name="Sharp S."/>
            <person name="Simmonds M."/>
            <person name="Stevens K."/>
            <person name="Whitehead S."/>
            <person name="Barrell B.G."/>
            <person name="Spratt B.G."/>
            <person name="Parkhill J."/>
        </authorList>
    </citation>
    <scope>NUCLEOTIDE SEQUENCE [LARGE SCALE GENOMIC DNA]</scope>
    <source>
        <strain>MRSA252</strain>
    </source>
</reference>
<evidence type="ECO:0000255" key="1">
    <source>
        <dbReference type="HAMAP-Rule" id="MF_01393"/>
    </source>
</evidence>
<organism>
    <name type="scientific">Staphylococcus aureus (strain MRSA252)</name>
    <dbReference type="NCBI Taxonomy" id="282458"/>
    <lineage>
        <taxon>Bacteria</taxon>
        <taxon>Bacillati</taxon>
        <taxon>Bacillota</taxon>
        <taxon>Bacilli</taxon>
        <taxon>Bacillales</taxon>
        <taxon>Staphylococcaceae</taxon>
        <taxon>Staphylococcus</taxon>
    </lineage>
</organism>
<name>ATP6_STAAR</name>
<feature type="chain" id="PRO_1000145314" description="ATP synthase subunit a">
    <location>
        <begin position="1"/>
        <end position="242"/>
    </location>
</feature>
<feature type="transmembrane region" description="Helical" evidence="1">
    <location>
        <begin position="21"/>
        <end position="41"/>
    </location>
</feature>
<feature type="transmembrane region" description="Helical" evidence="1">
    <location>
        <begin position="83"/>
        <end position="103"/>
    </location>
</feature>
<feature type="transmembrane region" description="Helical" evidence="1">
    <location>
        <begin position="117"/>
        <end position="137"/>
    </location>
</feature>
<feature type="transmembrane region" description="Helical" evidence="1">
    <location>
        <begin position="175"/>
        <end position="195"/>
    </location>
</feature>
<feature type="transmembrane region" description="Helical" evidence="1">
    <location>
        <begin position="198"/>
        <end position="218"/>
    </location>
</feature>
<keyword id="KW-0066">ATP synthesis</keyword>
<keyword id="KW-1003">Cell membrane</keyword>
<keyword id="KW-0138">CF(0)</keyword>
<keyword id="KW-0375">Hydrogen ion transport</keyword>
<keyword id="KW-0406">Ion transport</keyword>
<keyword id="KW-0472">Membrane</keyword>
<keyword id="KW-0812">Transmembrane</keyword>
<keyword id="KW-1133">Transmembrane helix</keyword>
<keyword id="KW-0813">Transport</keyword>
<protein>
    <recommendedName>
        <fullName evidence="1">ATP synthase subunit a</fullName>
    </recommendedName>
    <alternativeName>
        <fullName evidence="1">ATP synthase F0 sector subunit a</fullName>
    </alternativeName>
    <alternativeName>
        <fullName evidence="1">F-ATPase subunit 6</fullName>
    </alternativeName>
</protein>
<gene>
    <name evidence="1" type="primary">atpB</name>
    <name type="ordered locus">SAR2197</name>
</gene>
<dbReference type="EMBL" id="BX571856">
    <property type="protein sequence ID" value="CAG41178.1"/>
    <property type="molecule type" value="Genomic_DNA"/>
</dbReference>
<dbReference type="RefSeq" id="WP_000349655.1">
    <property type="nucleotide sequence ID" value="NC_002952.2"/>
</dbReference>
<dbReference type="SMR" id="Q6GEW6"/>
<dbReference type="KEGG" id="sar:SAR2197"/>
<dbReference type="HOGENOM" id="CLU_041018_2_3_9"/>
<dbReference type="Proteomes" id="UP000000596">
    <property type="component" value="Chromosome"/>
</dbReference>
<dbReference type="GO" id="GO:0005886">
    <property type="term" value="C:plasma membrane"/>
    <property type="evidence" value="ECO:0007669"/>
    <property type="project" value="UniProtKB-SubCell"/>
</dbReference>
<dbReference type="GO" id="GO:0045259">
    <property type="term" value="C:proton-transporting ATP synthase complex"/>
    <property type="evidence" value="ECO:0007669"/>
    <property type="project" value="UniProtKB-KW"/>
</dbReference>
<dbReference type="GO" id="GO:0046933">
    <property type="term" value="F:proton-transporting ATP synthase activity, rotational mechanism"/>
    <property type="evidence" value="ECO:0007669"/>
    <property type="project" value="UniProtKB-UniRule"/>
</dbReference>
<dbReference type="GO" id="GO:0042777">
    <property type="term" value="P:proton motive force-driven plasma membrane ATP synthesis"/>
    <property type="evidence" value="ECO:0007669"/>
    <property type="project" value="TreeGrafter"/>
</dbReference>
<dbReference type="CDD" id="cd00310">
    <property type="entry name" value="ATP-synt_Fo_a_6"/>
    <property type="match status" value="1"/>
</dbReference>
<dbReference type="FunFam" id="1.20.120.220:FF:000005">
    <property type="entry name" value="ATP synthase subunit a"/>
    <property type="match status" value="1"/>
</dbReference>
<dbReference type="Gene3D" id="1.20.120.220">
    <property type="entry name" value="ATP synthase, F0 complex, subunit A"/>
    <property type="match status" value="1"/>
</dbReference>
<dbReference type="HAMAP" id="MF_01393">
    <property type="entry name" value="ATP_synth_a_bact"/>
    <property type="match status" value="1"/>
</dbReference>
<dbReference type="InterPro" id="IPR045082">
    <property type="entry name" value="ATP_syn_F0_a_bact/chloroplast"/>
</dbReference>
<dbReference type="InterPro" id="IPR000568">
    <property type="entry name" value="ATP_synth_F0_asu"/>
</dbReference>
<dbReference type="InterPro" id="IPR023011">
    <property type="entry name" value="ATP_synth_F0_asu_AS"/>
</dbReference>
<dbReference type="InterPro" id="IPR035908">
    <property type="entry name" value="F0_ATP_A_sf"/>
</dbReference>
<dbReference type="NCBIfam" id="TIGR01131">
    <property type="entry name" value="ATP_synt_6_or_A"/>
    <property type="match status" value="1"/>
</dbReference>
<dbReference type="NCBIfam" id="NF004479">
    <property type="entry name" value="PRK05815.1-4"/>
    <property type="match status" value="1"/>
</dbReference>
<dbReference type="PANTHER" id="PTHR42823">
    <property type="entry name" value="ATP SYNTHASE SUBUNIT A, CHLOROPLASTIC"/>
    <property type="match status" value="1"/>
</dbReference>
<dbReference type="PANTHER" id="PTHR42823:SF3">
    <property type="entry name" value="ATP SYNTHASE SUBUNIT A, CHLOROPLASTIC"/>
    <property type="match status" value="1"/>
</dbReference>
<dbReference type="Pfam" id="PF00119">
    <property type="entry name" value="ATP-synt_A"/>
    <property type="match status" value="1"/>
</dbReference>
<dbReference type="PRINTS" id="PR00123">
    <property type="entry name" value="ATPASEA"/>
</dbReference>
<dbReference type="SUPFAM" id="SSF81336">
    <property type="entry name" value="F1F0 ATP synthase subunit A"/>
    <property type="match status" value="1"/>
</dbReference>
<dbReference type="PROSITE" id="PS00449">
    <property type="entry name" value="ATPASE_A"/>
    <property type="match status" value="1"/>
</dbReference>
<proteinExistence type="inferred from homology"/>
<comment type="function">
    <text evidence="1">Key component of the proton channel; it plays a direct role in the translocation of protons across the membrane.</text>
</comment>
<comment type="subunit">
    <text evidence="1">F-type ATPases have 2 components, CF(1) - the catalytic core - and CF(0) - the membrane proton channel. CF(1) has five subunits: alpha(3), beta(3), gamma(1), delta(1), epsilon(1). CF(0) has three main subunits: a(1), b(2) and c(9-12). The alpha and beta chains form an alternating ring which encloses part of the gamma chain. CF(1) is attached to CF(0) by a central stalk formed by the gamma and epsilon chains, while a peripheral stalk is formed by the delta and b chains.</text>
</comment>
<comment type="subcellular location">
    <subcellularLocation>
        <location evidence="1">Cell membrane</location>
        <topology evidence="1">Multi-pass membrane protein</topology>
    </subcellularLocation>
</comment>
<comment type="similarity">
    <text evidence="1">Belongs to the ATPase A chain family.</text>
</comment>